<protein>
    <recommendedName>
        <fullName evidence="1">Large ribosomal subunit protein uL1</fullName>
    </recommendedName>
    <alternativeName>
        <fullName evidence="2">50S ribosomal protein L1</fullName>
    </alternativeName>
</protein>
<organism>
    <name type="scientific">Mycoplasma pneumoniae (strain ATCC 29342 / M129 / Subtype 1)</name>
    <name type="common">Mycoplasmoides pneumoniae</name>
    <dbReference type="NCBI Taxonomy" id="272634"/>
    <lineage>
        <taxon>Bacteria</taxon>
        <taxon>Bacillati</taxon>
        <taxon>Mycoplasmatota</taxon>
        <taxon>Mycoplasmoidales</taxon>
        <taxon>Mycoplasmoidaceae</taxon>
        <taxon>Mycoplasmoides</taxon>
    </lineage>
</organism>
<name>RL1_MYCPN</name>
<reference key="1">
    <citation type="journal article" date="1996" name="Nucleic Acids Res.">
        <title>Complete sequence analysis of the genome of the bacterium Mycoplasma pneumoniae.</title>
        <authorList>
            <person name="Himmelreich R."/>
            <person name="Hilbert H."/>
            <person name="Plagens H."/>
            <person name="Pirkl E."/>
            <person name="Li B.-C."/>
            <person name="Herrmann R."/>
        </authorList>
    </citation>
    <scope>NUCLEOTIDE SEQUENCE [LARGE SCALE GENOMIC DNA]</scope>
    <source>
        <strain>ATCC 29342 / M129 / Subtype 1</strain>
    </source>
</reference>
<proteinExistence type="evidence at protein level"/>
<sequence>MAKLSKKMKIAVGLVDKTKLYPLQEAVDLVKKTSITKFNGSVDIAVSLNLDTTKAEQQLRGAIAFPHSVGKPIRILAITDDEKAALEAGADFVGGIDKINDIKNGWLDFDLIITSPKFMAALGKLGKLLGTKGLMPNPKTETVTDDVPAAVRAYKKGKKEYRADSFGNIHMSLGRVDSASNHLVENALALLDLIKSRKPATVKGIYIKNIALTTTMGPSLKVKLPD</sequence>
<feature type="chain" id="PRO_0000125693" description="Large ribosomal subunit protein uL1">
    <location>
        <begin position="1"/>
        <end position="226"/>
    </location>
</feature>
<comment type="function">
    <text evidence="1">Binds directly to 23S rRNA. The L1 stalk is quite mobile in the ribosome, and is involved in E site tRNA release.</text>
</comment>
<comment type="function">
    <text evidence="1">Protein L1 is also a translational repressor protein, it controls the translation of the L11 operon by binding to its mRNA.</text>
</comment>
<comment type="subunit">
    <text evidence="1">Part of the 50S ribosomal subunit.</text>
</comment>
<comment type="similarity">
    <text evidence="1">Belongs to the universal ribosomal protein uL1 family.</text>
</comment>
<evidence type="ECO:0000255" key="1">
    <source>
        <dbReference type="HAMAP-Rule" id="MF_01318"/>
    </source>
</evidence>
<evidence type="ECO:0000305" key="2"/>
<accession>P78035</accession>
<keyword id="KW-0002">3D-structure</keyword>
<keyword id="KW-1185">Reference proteome</keyword>
<keyword id="KW-0678">Repressor</keyword>
<keyword id="KW-0687">Ribonucleoprotein</keyword>
<keyword id="KW-0689">Ribosomal protein</keyword>
<keyword id="KW-0694">RNA-binding</keyword>
<keyword id="KW-0699">rRNA-binding</keyword>
<keyword id="KW-0810">Translation regulation</keyword>
<keyword id="KW-0820">tRNA-binding</keyword>
<gene>
    <name evidence="1" type="primary">rplA</name>
    <name type="ordered locus">MPN_220</name>
    <name type="ORF">MP611</name>
</gene>
<dbReference type="EMBL" id="U00089">
    <property type="protein sequence ID" value="AAB96259.1"/>
    <property type="molecule type" value="Genomic_DNA"/>
</dbReference>
<dbReference type="PIR" id="S73937">
    <property type="entry name" value="S73937"/>
</dbReference>
<dbReference type="RefSeq" id="NP_109908.1">
    <property type="nucleotide sequence ID" value="NC_000912.1"/>
</dbReference>
<dbReference type="RefSeq" id="WP_010874577.1">
    <property type="nucleotide sequence ID" value="NZ_OU342337.1"/>
</dbReference>
<dbReference type="PDB" id="8P8V">
    <property type="method" value="EM"/>
    <property type="resolution" value="8.70 A"/>
    <property type="chains" value="9=1-226"/>
</dbReference>
<dbReference type="PDBsum" id="8P8V"/>
<dbReference type="SMR" id="P78035"/>
<dbReference type="IntAct" id="P78035">
    <property type="interactions" value="10"/>
</dbReference>
<dbReference type="STRING" id="272634.MPN_220"/>
<dbReference type="EnsemblBacteria" id="AAB96259">
    <property type="protein sequence ID" value="AAB96259"/>
    <property type="gene ID" value="MPN_220"/>
</dbReference>
<dbReference type="GeneID" id="66609134"/>
<dbReference type="KEGG" id="mpn:MPN_220"/>
<dbReference type="PATRIC" id="fig|272634.6.peg.239"/>
<dbReference type="HOGENOM" id="CLU_062853_0_0_14"/>
<dbReference type="OrthoDB" id="9803740at2"/>
<dbReference type="BioCyc" id="MPNE272634:G1GJ3-355-MONOMER"/>
<dbReference type="Proteomes" id="UP000000808">
    <property type="component" value="Chromosome"/>
</dbReference>
<dbReference type="GO" id="GO:0015934">
    <property type="term" value="C:large ribosomal subunit"/>
    <property type="evidence" value="ECO:0007669"/>
    <property type="project" value="InterPro"/>
</dbReference>
<dbReference type="GO" id="GO:0019843">
    <property type="term" value="F:rRNA binding"/>
    <property type="evidence" value="ECO:0007669"/>
    <property type="project" value="UniProtKB-UniRule"/>
</dbReference>
<dbReference type="GO" id="GO:0003735">
    <property type="term" value="F:structural constituent of ribosome"/>
    <property type="evidence" value="ECO:0007669"/>
    <property type="project" value="InterPro"/>
</dbReference>
<dbReference type="GO" id="GO:0000049">
    <property type="term" value="F:tRNA binding"/>
    <property type="evidence" value="ECO:0007669"/>
    <property type="project" value="UniProtKB-KW"/>
</dbReference>
<dbReference type="GO" id="GO:0006417">
    <property type="term" value="P:regulation of translation"/>
    <property type="evidence" value="ECO:0007669"/>
    <property type="project" value="UniProtKB-KW"/>
</dbReference>
<dbReference type="GO" id="GO:0006412">
    <property type="term" value="P:translation"/>
    <property type="evidence" value="ECO:0007669"/>
    <property type="project" value="UniProtKB-UniRule"/>
</dbReference>
<dbReference type="CDD" id="cd00403">
    <property type="entry name" value="Ribosomal_L1"/>
    <property type="match status" value="1"/>
</dbReference>
<dbReference type="FunFam" id="3.40.50.790:FF:000001">
    <property type="entry name" value="50S ribosomal protein L1"/>
    <property type="match status" value="1"/>
</dbReference>
<dbReference type="Gene3D" id="3.30.190.20">
    <property type="match status" value="1"/>
</dbReference>
<dbReference type="Gene3D" id="3.40.50.790">
    <property type="match status" value="1"/>
</dbReference>
<dbReference type="HAMAP" id="MF_01318_B">
    <property type="entry name" value="Ribosomal_uL1_B"/>
    <property type="match status" value="1"/>
</dbReference>
<dbReference type="InterPro" id="IPR005878">
    <property type="entry name" value="Ribosom_uL1_bac-type"/>
</dbReference>
<dbReference type="InterPro" id="IPR002143">
    <property type="entry name" value="Ribosomal_uL1"/>
</dbReference>
<dbReference type="InterPro" id="IPR023674">
    <property type="entry name" value="Ribosomal_uL1-like"/>
</dbReference>
<dbReference type="InterPro" id="IPR028364">
    <property type="entry name" value="Ribosomal_uL1/biogenesis"/>
</dbReference>
<dbReference type="InterPro" id="IPR016095">
    <property type="entry name" value="Ribosomal_uL1_3-a/b-sand"/>
</dbReference>
<dbReference type="InterPro" id="IPR023673">
    <property type="entry name" value="Ribosomal_uL1_CS"/>
</dbReference>
<dbReference type="NCBIfam" id="TIGR01169">
    <property type="entry name" value="rplA_bact"/>
    <property type="match status" value="1"/>
</dbReference>
<dbReference type="PANTHER" id="PTHR36427">
    <property type="entry name" value="54S RIBOSOMAL PROTEIN L1, MITOCHONDRIAL"/>
    <property type="match status" value="1"/>
</dbReference>
<dbReference type="PANTHER" id="PTHR36427:SF3">
    <property type="entry name" value="LARGE RIBOSOMAL SUBUNIT PROTEIN UL1M"/>
    <property type="match status" value="1"/>
</dbReference>
<dbReference type="Pfam" id="PF00687">
    <property type="entry name" value="Ribosomal_L1"/>
    <property type="match status" value="1"/>
</dbReference>
<dbReference type="PIRSF" id="PIRSF002155">
    <property type="entry name" value="Ribosomal_L1"/>
    <property type="match status" value="1"/>
</dbReference>
<dbReference type="SUPFAM" id="SSF56808">
    <property type="entry name" value="Ribosomal protein L1"/>
    <property type="match status" value="1"/>
</dbReference>
<dbReference type="PROSITE" id="PS01199">
    <property type="entry name" value="RIBOSOMAL_L1"/>
    <property type="match status" value="1"/>
</dbReference>